<comment type="function">
    <text evidence="1">Part of the Sec protein translocase complex. Interacts with the SecYEG preprotein conducting channel. Has a central role in coupling the hydrolysis of ATP to the transfer of proteins into and across the cell membrane, serving both as a receptor for the preprotein-SecB complex and as an ATP-driven molecular motor driving the stepwise translocation of polypeptide chains across the membrane.</text>
</comment>
<comment type="catalytic activity">
    <reaction evidence="1">
        <text>ATP + H2O + cellular proteinSide 1 = ADP + phosphate + cellular proteinSide 2.</text>
        <dbReference type="EC" id="7.4.2.8"/>
    </reaction>
</comment>
<comment type="cofactor">
    <cofactor evidence="1">
        <name>Zn(2+)</name>
        <dbReference type="ChEBI" id="CHEBI:29105"/>
    </cofactor>
    <text evidence="1">May bind 1 zinc ion per subunit.</text>
</comment>
<comment type="subunit">
    <text evidence="1">Monomer and homodimer. Part of the essential Sec protein translocation apparatus which comprises SecA, SecYEG and auxiliary proteins SecDF-YajC and YidC.</text>
</comment>
<comment type="subcellular location">
    <subcellularLocation>
        <location evidence="1">Cell inner membrane</location>
        <topology evidence="1">Peripheral membrane protein</topology>
        <orientation evidence="1">Cytoplasmic side</orientation>
    </subcellularLocation>
    <subcellularLocation>
        <location evidence="1">Cytoplasm</location>
    </subcellularLocation>
    <text evidence="1">Distribution is 50-50.</text>
</comment>
<comment type="similarity">
    <text evidence="1">Belongs to the SecA family.</text>
</comment>
<reference key="1">
    <citation type="submission" date="2007-12" db="EMBL/GenBank/DDBJ databases">
        <title>Brucella suis ATCC 23445 whole genome shotgun sequencing project.</title>
        <authorList>
            <person name="Setubal J.C."/>
            <person name="Bowns C."/>
            <person name="Boyle S."/>
            <person name="Crasta O.R."/>
            <person name="Czar M.J."/>
            <person name="Dharmanolla C."/>
            <person name="Gillespie J.J."/>
            <person name="Kenyon R.W."/>
            <person name="Lu J."/>
            <person name="Mane S."/>
            <person name="Mohapatra S."/>
            <person name="Nagrani S."/>
            <person name="Purkayastha A."/>
            <person name="Rajasimha H.K."/>
            <person name="Shallom J.M."/>
            <person name="Shallom S."/>
            <person name="Shukla M."/>
            <person name="Snyder E.E."/>
            <person name="Sobral B.W."/>
            <person name="Wattam A.R."/>
            <person name="Will R."/>
            <person name="Williams K."/>
            <person name="Yoo H."/>
            <person name="Bruce D."/>
            <person name="Detter C."/>
            <person name="Munk C."/>
            <person name="Brettin T.S."/>
        </authorList>
    </citation>
    <scope>NUCLEOTIDE SEQUENCE [LARGE SCALE GENOMIC DNA]</scope>
    <source>
        <strain>ATCC 23445 / NCTC 10510</strain>
    </source>
</reference>
<name>SECA_BRUSI</name>
<dbReference type="EC" id="7.4.2.8" evidence="1"/>
<dbReference type="EMBL" id="CP000911">
    <property type="protein sequence ID" value="ABY38802.1"/>
    <property type="molecule type" value="Genomic_DNA"/>
</dbReference>
<dbReference type="RefSeq" id="WP_002965012.1">
    <property type="nucleotide sequence ID" value="NC_010169.1"/>
</dbReference>
<dbReference type="SMR" id="B0CIU9"/>
<dbReference type="GeneID" id="93017729"/>
<dbReference type="KEGG" id="bmt:BSUIS_A1785"/>
<dbReference type="HOGENOM" id="CLU_005314_3_0_5"/>
<dbReference type="Proteomes" id="UP000008545">
    <property type="component" value="Chromosome I"/>
</dbReference>
<dbReference type="GO" id="GO:0031522">
    <property type="term" value="C:cell envelope Sec protein transport complex"/>
    <property type="evidence" value="ECO:0007669"/>
    <property type="project" value="TreeGrafter"/>
</dbReference>
<dbReference type="GO" id="GO:0005829">
    <property type="term" value="C:cytosol"/>
    <property type="evidence" value="ECO:0007669"/>
    <property type="project" value="TreeGrafter"/>
</dbReference>
<dbReference type="GO" id="GO:0005886">
    <property type="term" value="C:plasma membrane"/>
    <property type="evidence" value="ECO:0007669"/>
    <property type="project" value="UniProtKB-SubCell"/>
</dbReference>
<dbReference type="GO" id="GO:0005524">
    <property type="term" value="F:ATP binding"/>
    <property type="evidence" value="ECO:0007669"/>
    <property type="project" value="UniProtKB-UniRule"/>
</dbReference>
<dbReference type="GO" id="GO:0046872">
    <property type="term" value="F:metal ion binding"/>
    <property type="evidence" value="ECO:0007669"/>
    <property type="project" value="UniProtKB-KW"/>
</dbReference>
<dbReference type="GO" id="GO:0008564">
    <property type="term" value="F:protein-exporting ATPase activity"/>
    <property type="evidence" value="ECO:0007669"/>
    <property type="project" value="UniProtKB-EC"/>
</dbReference>
<dbReference type="GO" id="GO:0065002">
    <property type="term" value="P:intracellular protein transmembrane transport"/>
    <property type="evidence" value="ECO:0007669"/>
    <property type="project" value="UniProtKB-UniRule"/>
</dbReference>
<dbReference type="GO" id="GO:0017038">
    <property type="term" value="P:protein import"/>
    <property type="evidence" value="ECO:0007669"/>
    <property type="project" value="InterPro"/>
</dbReference>
<dbReference type="GO" id="GO:0006605">
    <property type="term" value="P:protein targeting"/>
    <property type="evidence" value="ECO:0007669"/>
    <property type="project" value="UniProtKB-UniRule"/>
</dbReference>
<dbReference type="GO" id="GO:0043952">
    <property type="term" value="P:protein transport by the Sec complex"/>
    <property type="evidence" value="ECO:0007669"/>
    <property type="project" value="TreeGrafter"/>
</dbReference>
<dbReference type="CDD" id="cd17928">
    <property type="entry name" value="DEXDc_SecA"/>
    <property type="match status" value="1"/>
</dbReference>
<dbReference type="CDD" id="cd18803">
    <property type="entry name" value="SF2_C_secA"/>
    <property type="match status" value="1"/>
</dbReference>
<dbReference type="FunFam" id="3.90.1440.10:FF:000001">
    <property type="entry name" value="Preprotein translocase subunit SecA"/>
    <property type="match status" value="1"/>
</dbReference>
<dbReference type="FunFam" id="1.10.3060.10:FF:000003">
    <property type="entry name" value="Protein translocase subunit SecA"/>
    <property type="match status" value="1"/>
</dbReference>
<dbReference type="FunFam" id="3.40.50.300:FF:000334">
    <property type="entry name" value="Protein translocase subunit SecA"/>
    <property type="match status" value="1"/>
</dbReference>
<dbReference type="FunFam" id="3.40.50.300:FF:001790">
    <property type="entry name" value="Protein translocase subunit SecA"/>
    <property type="match status" value="1"/>
</dbReference>
<dbReference type="Gene3D" id="3.10.450.50">
    <property type="match status" value="1"/>
</dbReference>
<dbReference type="Gene3D" id="1.10.3060.10">
    <property type="entry name" value="Helical scaffold and wing domains of SecA"/>
    <property type="match status" value="1"/>
</dbReference>
<dbReference type="Gene3D" id="3.40.50.300">
    <property type="entry name" value="P-loop containing nucleotide triphosphate hydrolases"/>
    <property type="match status" value="2"/>
</dbReference>
<dbReference type="Gene3D" id="3.90.1440.10">
    <property type="entry name" value="SecA, preprotein cross-linking domain"/>
    <property type="match status" value="1"/>
</dbReference>
<dbReference type="HAMAP" id="MF_01382">
    <property type="entry name" value="SecA"/>
    <property type="match status" value="1"/>
</dbReference>
<dbReference type="InterPro" id="IPR014001">
    <property type="entry name" value="Helicase_ATP-bd"/>
</dbReference>
<dbReference type="InterPro" id="IPR001650">
    <property type="entry name" value="Helicase_C-like"/>
</dbReference>
<dbReference type="InterPro" id="IPR027417">
    <property type="entry name" value="P-loop_NTPase"/>
</dbReference>
<dbReference type="InterPro" id="IPR004027">
    <property type="entry name" value="SEC_C_motif"/>
</dbReference>
<dbReference type="InterPro" id="IPR000185">
    <property type="entry name" value="SecA"/>
</dbReference>
<dbReference type="InterPro" id="IPR020937">
    <property type="entry name" value="SecA_CS"/>
</dbReference>
<dbReference type="InterPro" id="IPR011115">
    <property type="entry name" value="SecA_DEAD"/>
</dbReference>
<dbReference type="InterPro" id="IPR014018">
    <property type="entry name" value="SecA_motor_DEAD"/>
</dbReference>
<dbReference type="InterPro" id="IPR011130">
    <property type="entry name" value="SecA_preprotein_X-link_dom"/>
</dbReference>
<dbReference type="InterPro" id="IPR044722">
    <property type="entry name" value="SecA_SF2_C"/>
</dbReference>
<dbReference type="InterPro" id="IPR011116">
    <property type="entry name" value="SecA_Wing/Scaffold"/>
</dbReference>
<dbReference type="InterPro" id="IPR036266">
    <property type="entry name" value="SecA_Wing/Scaffold_sf"/>
</dbReference>
<dbReference type="InterPro" id="IPR036670">
    <property type="entry name" value="SecA_X-link_sf"/>
</dbReference>
<dbReference type="NCBIfam" id="NF009538">
    <property type="entry name" value="PRK12904.1"/>
    <property type="match status" value="1"/>
</dbReference>
<dbReference type="NCBIfam" id="TIGR00963">
    <property type="entry name" value="secA"/>
    <property type="match status" value="1"/>
</dbReference>
<dbReference type="PANTHER" id="PTHR30612:SF0">
    <property type="entry name" value="CHLOROPLAST PROTEIN-TRANSPORTING ATPASE"/>
    <property type="match status" value="1"/>
</dbReference>
<dbReference type="PANTHER" id="PTHR30612">
    <property type="entry name" value="SECA INNER MEMBRANE COMPONENT OF SEC PROTEIN SECRETION SYSTEM"/>
    <property type="match status" value="1"/>
</dbReference>
<dbReference type="Pfam" id="PF21090">
    <property type="entry name" value="P-loop_SecA"/>
    <property type="match status" value="1"/>
</dbReference>
<dbReference type="Pfam" id="PF02810">
    <property type="entry name" value="SEC-C"/>
    <property type="match status" value="1"/>
</dbReference>
<dbReference type="Pfam" id="PF07517">
    <property type="entry name" value="SecA_DEAD"/>
    <property type="match status" value="1"/>
</dbReference>
<dbReference type="Pfam" id="PF01043">
    <property type="entry name" value="SecA_PP_bind"/>
    <property type="match status" value="1"/>
</dbReference>
<dbReference type="Pfam" id="PF07516">
    <property type="entry name" value="SecA_SW"/>
    <property type="match status" value="1"/>
</dbReference>
<dbReference type="PRINTS" id="PR00906">
    <property type="entry name" value="SECA"/>
</dbReference>
<dbReference type="SMART" id="SM00957">
    <property type="entry name" value="SecA_DEAD"/>
    <property type="match status" value="1"/>
</dbReference>
<dbReference type="SMART" id="SM00958">
    <property type="entry name" value="SecA_PP_bind"/>
    <property type="match status" value="1"/>
</dbReference>
<dbReference type="SUPFAM" id="SSF81886">
    <property type="entry name" value="Helical scaffold and wing domains of SecA"/>
    <property type="match status" value="1"/>
</dbReference>
<dbReference type="SUPFAM" id="SSF52540">
    <property type="entry name" value="P-loop containing nucleoside triphosphate hydrolases"/>
    <property type="match status" value="2"/>
</dbReference>
<dbReference type="SUPFAM" id="SSF81767">
    <property type="entry name" value="Pre-protein crosslinking domain of SecA"/>
    <property type="match status" value="1"/>
</dbReference>
<dbReference type="PROSITE" id="PS01312">
    <property type="entry name" value="SECA"/>
    <property type="match status" value="1"/>
</dbReference>
<dbReference type="PROSITE" id="PS51196">
    <property type="entry name" value="SECA_MOTOR_DEAD"/>
    <property type="match status" value="1"/>
</dbReference>
<keyword id="KW-0067">ATP-binding</keyword>
<keyword id="KW-0997">Cell inner membrane</keyword>
<keyword id="KW-1003">Cell membrane</keyword>
<keyword id="KW-0963">Cytoplasm</keyword>
<keyword id="KW-0472">Membrane</keyword>
<keyword id="KW-0479">Metal-binding</keyword>
<keyword id="KW-0547">Nucleotide-binding</keyword>
<keyword id="KW-0653">Protein transport</keyword>
<keyword id="KW-1278">Translocase</keyword>
<keyword id="KW-0811">Translocation</keyword>
<keyword id="KW-0813">Transport</keyword>
<keyword id="KW-0862">Zinc</keyword>
<accession>B0CIU9</accession>
<proteinExistence type="inferred from homology"/>
<sequence>MVSFGGLARKIFGSSNDRRVKTLRQRAEQITALEKNYENLTDEQLQAKTAEFRAALAEGKSLDSLLPDAFATAREAAKRVLGMRPFDVQLIGGMVLHERGIAEMRTGEGKTLMATLPVYLNALEGKGVHVVTVNDYLATRDAETMGRLYNFLGLTVGVIKHGLDDDERRAAYACDITYGTNNELGFDYLRDNMKYERAQMVQRPHNYAIVDEVDSILIDEARTPLIISGPLEDRSDFYNLIDTFIPPLAEEDYEVDEKQKTAIFTEVGTEKVEKLLEAAGHLKGESLYDIENVAVVHHLNNALRAHKLFQRDKDYIVRNDEIVIIDEFTGRMMPGRRYSEGLHQALEAKEHVTIQPENQTLASITFQNYFRMYNKLSGMTGTAATEAEEFGNIYGLEVLEIPTNLPVQRIDEDDEVYRTVEEKYRAIVRDIRASHEKGQPILVGTTSIEKSEQLAERLRREGIKGFQVLNARYHEQEAYIIAQAGVPGAVTIATNMAGRGTDIQLGGNLEMRVRQELSDVPEGPEREEKIAAIKADIAQLKEKALAAGGLYVLATERHESRRIDNQLRGRSGRQGDPGRSKFFLSLQDDLMRIFGSDRMDGMLQKLGLKEDEAIVHPWINKALEKAQKKVEARNFEIRKNLLKYDDVMNDQRKVIFEQRLEMMDEEDLTETVAEMRHEVIEDMVILRIPKDAYAEKWDIAGLKQDIASKLNLDLPVEEWAKEEGIAEEEFENRIKEAADKAAAEKAERFGPQIMTYVEKSVIMQSLDNLWREHLVNLDHLRSVVGFRGYAQRDPLNEYKTEAFELFQTMLANLREVVISQLMRVEIVREAPPEPQLPPMAGLHIDGTTGENDFDEAIWAEHQHDDRIVPPAQRDPADPRTWGKVSRNEPCPCGSGKKYKHCHGAFE</sequence>
<feature type="chain" id="PRO_1000087308" description="Protein translocase subunit SecA">
    <location>
        <begin position="1"/>
        <end position="906"/>
    </location>
</feature>
<feature type="region of interest" description="Disordered" evidence="2">
    <location>
        <begin position="868"/>
        <end position="887"/>
    </location>
</feature>
<feature type="binding site" evidence="1">
    <location>
        <position position="89"/>
    </location>
    <ligand>
        <name>ATP</name>
        <dbReference type="ChEBI" id="CHEBI:30616"/>
    </ligand>
</feature>
<feature type="binding site" evidence="1">
    <location>
        <begin position="107"/>
        <end position="111"/>
    </location>
    <ligand>
        <name>ATP</name>
        <dbReference type="ChEBI" id="CHEBI:30616"/>
    </ligand>
</feature>
<feature type="binding site" evidence="1">
    <location>
        <position position="502"/>
    </location>
    <ligand>
        <name>ATP</name>
        <dbReference type="ChEBI" id="CHEBI:30616"/>
    </ligand>
</feature>
<feature type="binding site" evidence="1">
    <location>
        <position position="890"/>
    </location>
    <ligand>
        <name>Zn(2+)</name>
        <dbReference type="ChEBI" id="CHEBI:29105"/>
    </ligand>
</feature>
<feature type="binding site" evidence="1">
    <location>
        <position position="892"/>
    </location>
    <ligand>
        <name>Zn(2+)</name>
        <dbReference type="ChEBI" id="CHEBI:29105"/>
    </ligand>
</feature>
<feature type="binding site" evidence="1">
    <location>
        <position position="901"/>
    </location>
    <ligand>
        <name>Zn(2+)</name>
        <dbReference type="ChEBI" id="CHEBI:29105"/>
    </ligand>
</feature>
<feature type="binding site" evidence="1">
    <location>
        <position position="902"/>
    </location>
    <ligand>
        <name>Zn(2+)</name>
        <dbReference type="ChEBI" id="CHEBI:29105"/>
    </ligand>
</feature>
<organism>
    <name type="scientific">Brucella suis (strain ATCC 23445 / NCTC 10510)</name>
    <dbReference type="NCBI Taxonomy" id="470137"/>
    <lineage>
        <taxon>Bacteria</taxon>
        <taxon>Pseudomonadati</taxon>
        <taxon>Pseudomonadota</taxon>
        <taxon>Alphaproteobacteria</taxon>
        <taxon>Hyphomicrobiales</taxon>
        <taxon>Brucellaceae</taxon>
        <taxon>Brucella/Ochrobactrum group</taxon>
        <taxon>Brucella</taxon>
    </lineage>
</organism>
<protein>
    <recommendedName>
        <fullName evidence="1">Protein translocase subunit SecA</fullName>
        <ecNumber evidence="1">7.4.2.8</ecNumber>
    </recommendedName>
</protein>
<gene>
    <name evidence="1" type="primary">secA</name>
    <name type="ordered locus">BSUIS_A1785</name>
</gene>
<evidence type="ECO:0000255" key="1">
    <source>
        <dbReference type="HAMAP-Rule" id="MF_01382"/>
    </source>
</evidence>
<evidence type="ECO:0000256" key="2">
    <source>
        <dbReference type="SAM" id="MobiDB-lite"/>
    </source>
</evidence>